<accession>A8GV08</accession>
<evidence type="ECO:0000255" key="1">
    <source>
        <dbReference type="HAMAP-Rule" id="MF_00469"/>
    </source>
</evidence>
<organism>
    <name type="scientific">Rickettsia bellii (strain OSU 85-389)</name>
    <dbReference type="NCBI Taxonomy" id="391896"/>
    <lineage>
        <taxon>Bacteria</taxon>
        <taxon>Pseudomonadati</taxon>
        <taxon>Pseudomonadota</taxon>
        <taxon>Alphaproteobacteria</taxon>
        <taxon>Rickettsiales</taxon>
        <taxon>Rickettsiaceae</taxon>
        <taxon>Rickettsieae</taxon>
        <taxon>Rickettsia</taxon>
        <taxon>belli group</taxon>
    </lineage>
</organism>
<sequence>MSEKIAILSAYSFVNIEEPESLIPKLLFVGKRKYVKGTILLSKEGFNGSFSGSYESVNLVLEELKKLTNTKDVNVKINYSEIHPFQKLKVRLKKEIVAMNVDNLNVNLFKGEYIETKDWDEFITKQDVIVVDTRNDYEVEVGTFKAAINPYTETFKQFPAWAEQNAELLKGKKIAMFCTGGIRCEKSTSLLKSMGHEEVYHLKGGILQYLEDTQNKNNLWQGECFVFDDRRAVADDLAPAEGYWLERK</sequence>
<gene>
    <name evidence="1" type="primary">trhO</name>
    <name type="ordered locus">A1I_01435</name>
</gene>
<name>TRHO_RICB8</name>
<protein>
    <recommendedName>
        <fullName evidence="1">tRNA uridine(34) hydroxylase</fullName>
        <ecNumber evidence="1">1.14.-.-</ecNumber>
    </recommendedName>
    <alternativeName>
        <fullName evidence="1">tRNA hydroxylation protein O</fullName>
    </alternativeName>
</protein>
<dbReference type="EC" id="1.14.-.-" evidence="1"/>
<dbReference type="EMBL" id="CP000849">
    <property type="protein sequence ID" value="ABV78679.1"/>
    <property type="molecule type" value="Genomic_DNA"/>
</dbReference>
<dbReference type="RefSeq" id="WP_012151616.1">
    <property type="nucleotide sequence ID" value="NC_009883.1"/>
</dbReference>
<dbReference type="SMR" id="A8GV08"/>
<dbReference type="KEGG" id="rbo:A1I_01435"/>
<dbReference type="HOGENOM" id="CLU_038878_0_1_5"/>
<dbReference type="GO" id="GO:0016705">
    <property type="term" value="F:oxidoreductase activity, acting on paired donors, with incorporation or reduction of molecular oxygen"/>
    <property type="evidence" value="ECO:0007669"/>
    <property type="project" value="UniProtKB-UniRule"/>
</dbReference>
<dbReference type="GO" id="GO:0006400">
    <property type="term" value="P:tRNA modification"/>
    <property type="evidence" value="ECO:0007669"/>
    <property type="project" value="UniProtKB-UniRule"/>
</dbReference>
<dbReference type="CDD" id="cd01518">
    <property type="entry name" value="RHOD_YceA"/>
    <property type="match status" value="1"/>
</dbReference>
<dbReference type="Gene3D" id="3.30.70.100">
    <property type="match status" value="1"/>
</dbReference>
<dbReference type="Gene3D" id="3.40.250.10">
    <property type="entry name" value="Rhodanese-like domain"/>
    <property type="match status" value="1"/>
</dbReference>
<dbReference type="HAMAP" id="MF_00469">
    <property type="entry name" value="TrhO"/>
    <property type="match status" value="1"/>
</dbReference>
<dbReference type="InterPro" id="IPR001763">
    <property type="entry name" value="Rhodanese-like_dom"/>
</dbReference>
<dbReference type="InterPro" id="IPR036873">
    <property type="entry name" value="Rhodanese-like_dom_sf"/>
</dbReference>
<dbReference type="InterPro" id="IPR020936">
    <property type="entry name" value="TrhO"/>
</dbReference>
<dbReference type="InterPro" id="IPR040503">
    <property type="entry name" value="TRHO_N"/>
</dbReference>
<dbReference type="NCBIfam" id="NF002397">
    <property type="entry name" value="PRK01415.1"/>
    <property type="match status" value="1"/>
</dbReference>
<dbReference type="PANTHER" id="PTHR43268:SF3">
    <property type="entry name" value="RHODANESE-LIKE DOMAIN-CONTAINING PROTEIN 7-RELATED"/>
    <property type="match status" value="1"/>
</dbReference>
<dbReference type="PANTHER" id="PTHR43268">
    <property type="entry name" value="THIOSULFATE SULFURTRANSFERASE/RHODANESE-LIKE DOMAIN-CONTAINING PROTEIN 2"/>
    <property type="match status" value="1"/>
</dbReference>
<dbReference type="Pfam" id="PF00581">
    <property type="entry name" value="Rhodanese"/>
    <property type="match status" value="1"/>
</dbReference>
<dbReference type="Pfam" id="PF17773">
    <property type="entry name" value="UPF0176_N"/>
    <property type="match status" value="1"/>
</dbReference>
<dbReference type="SMART" id="SM00450">
    <property type="entry name" value="RHOD"/>
    <property type="match status" value="1"/>
</dbReference>
<dbReference type="SUPFAM" id="SSF52821">
    <property type="entry name" value="Rhodanese/Cell cycle control phosphatase"/>
    <property type="match status" value="1"/>
</dbReference>
<dbReference type="PROSITE" id="PS50206">
    <property type="entry name" value="RHODANESE_3"/>
    <property type="match status" value="1"/>
</dbReference>
<reference key="1">
    <citation type="submission" date="2007-09" db="EMBL/GenBank/DDBJ databases">
        <title>Complete genome sequencing of Rickettsia bellii.</title>
        <authorList>
            <person name="Madan A."/>
            <person name="Lee H."/>
            <person name="Madan A."/>
            <person name="Yoon J.-G."/>
            <person name="Ryu G.-Y."/>
            <person name="Dasch G."/>
            <person name="Ereemeva M."/>
        </authorList>
    </citation>
    <scope>NUCLEOTIDE SEQUENCE [LARGE SCALE GENOMIC DNA]</scope>
    <source>
        <strain>OSU 85-389</strain>
    </source>
</reference>
<proteinExistence type="inferred from homology"/>
<comment type="function">
    <text evidence="1">Catalyzes oxygen-dependent 5-hydroxyuridine (ho5U) modification at position 34 in tRNAs.</text>
</comment>
<comment type="catalytic activity">
    <reaction evidence="1">
        <text>uridine(34) in tRNA + AH2 + O2 = 5-hydroxyuridine(34) in tRNA + A + H2O</text>
        <dbReference type="Rhea" id="RHEA:64224"/>
        <dbReference type="Rhea" id="RHEA-COMP:11727"/>
        <dbReference type="Rhea" id="RHEA-COMP:13381"/>
        <dbReference type="ChEBI" id="CHEBI:13193"/>
        <dbReference type="ChEBI" id="CHEBI:15377"/>
        <dbReference type="ChEBI" id="CHEBI:15379"/>
        <dbReference type="ChEBI" id="CHEBI:17499"/>
        <dbReference type="ChEBI" id="CHEBI:65315"/>
        <dbReference type="ChEBI" id="CHEBI:136877"/>
    </reaction>
</comment>
<comment type="similarity">
    <text evidence="1">Belongs to the TrhO family.</text>
</comment>
<feature type="chain" id="PRO_1000013765" description="tRNA uridine(34) hydroxylase">
    <location>
        <begin position="1"/>
        <end position="248"/>
    </location>
</feature>
<feature type="domain" description="Rhodanese" evidence="1">
    <location>
        <begin position="124"/>
        <end position="218"/>
    </location>
</feature>
<feature type="active site" description="Cysteine persulfide intermediate" evidence="1">
    <location>
        <position position="178"/>
    </location>
</feature>
<keyword id="KW-0560">Oxidoreductase</keyword>
<keyword id="KW-0819">tRNA processing</keyword>